<keyword id="KW-0029">Amino-acid transport</keyword>
<keyword id="KW-1003">Cell membrane</keyword>
<keyword id="KW-0963">Cytoplasm</keyword>
<keyword id="KW-1015">Disulfide bond</keyword>
<keyword id="KW-0472">Membrane</keyword>
<keyword id="KW-1185">Reference proteome</keyword>
<keyword id="KW-0812">Transmembrane</keyword>
<keyword id="KW-1133">Transmembrane helix</keyword>
<keyword id="KW-0813">Transport</keyword>
<reference evidence="8" key="1">
    <citation type="journal article" date="2001" name="J. Biol. Chem.">
        <title>Identification and characterization of a novel member of the heterodimeric amino acid transporter family presumed to be associated with an unknown heavy chain.</title>
        <authorList>
            <person name="Chairoungdua A."/>
            <person name="Kanai Y."/>
            <person name="Matsuo H."/>
            <person name="Inatomi J."/>
            <person name="Kim D.K."/>
            <person name="Endou H."/>
        </authorList>
    </citation>
    <scope>NUCLEOTIDE SEQUENCE [MRNA]</scope>
    <scope>FUNCTION</scope>
    <scope>SUBUNIT</scope>
    <scope>SUBCELLULAR LOCATION</scope>
    <scope>TISSUE SPECIFICITY</scope>
</reference>
<reference evidence="9" key="2">
    <citation type="journal article" date="2002" name="Gene">
        <title>Homologues of amino acid permeases: cloning and tissue expression of XAT1 and XAT2.</title>
        <authorList>
            <person name="Blondeau J.-P."/>
        </authorList>
    </citation>
    <scope>NUCLEOTIDE SEQUENCE [MRNA]</scope>
    <scope>TISSUE SPECIFICITY</scope>
    <source>
        <strain evidence="9">BALB/cJ</strain>
        <tissue evidence="9">Kidney</tissue>
    </source>
</reference>
<reference evidence="11" key="3">
    <citation type="journal article" date="2009" name="PLoS Biol.">
        <title>Lineage-specific biology revealed by a finished genome assembly of the mouse.</title>
        <authorList>
            <person name="Church D.M."/>
            <person name="Goodstadt L."/>
            <person name="Hillier L.W."/>
            <person name="Zody M.C."/>
            <person name="Goldstein S."/>
            <person name="She X."/>
            <person name="Bult C.J."/>
            <person name="Agarwala R."/>
            <person name="Cherry J.L."/>
            <person name="DiCuccio M."/>
            <person name="Hlavina W."/>
            <person name="Kapustin Y."/>
            <person name="Meric P."/>
            <person name="Maglott D."/>
            <person name="Birtle Z."/>
            <person name="Marques A.C."/>
            <person name="Graves T."/>
            <person name="Zhou S."/>
            <person name="Teague B."/>
            <person name="Potamousis K."/>
            <person name="Churas C."/>
            <person name="Place M."/>
            <person name="Herschleb J."/>
            <person name="Runnheim R."/>
            <person name="Forrest D."/>
            <person name="Amos-Landgraf J."/>
            <person name="Schwartz D.C."/>
            <person name="Cheng Z."/>
            <person name="Lindblad-Toh K."/>
            <person name="Eichler E.E."/>
            <person name="Ponting C.P."/>
        </authorList>
    </citation>
    <scope>NUCLEOTIDE SEQUENCE [LARGE SCALE GENOMIC DNA]</scope>
    <source>
        <strain evidence="11">C57BL/6J</strain>
    </source>
</reference>
<name>S7A12_MOUSE</name>
<sequence>MQLLRALGVFHVSMILFSATLGTGIFVTPKAVLKYSSLNIPVSLSIWAGCGLLSIMSALCNAEIATTYPLSGASYYFLKRTLGSSVAFLSLWIKLFAHFLGIGAQCLLIATSVIQCFYSGCPAPELPTKCLALAILWSFGIVSARGIKTVAWFNTVSSFIKLSVLCLISLTVLLVNGKKENVSRFENALDAELPNASQIADAILQVSYSYLGSSVLIVIAGEIKRPTETIPKTLIYGISIVTVLYLLTNISYLAVLTSQEIIFSDSVGVTWMNRVFPSIQWISSFLISAFLLGSVSCGIVSASRVFYSASQEGEFPSIYSMLNDHHSPAVADIQIVILSSVAIISSSIIYLVKYVSLGSFCINLLQMIGLLKIRYQNPDIPRPYKVWLPFIFGSIALSLFLIFTPVIQSPSIEHVYQVVFLFCGFLCYWLQANLNGHATCFDTITCYCQLLFNISPSEDPEEQKN</sequence>
<organism evidence="11">
    <name type="scientific">Mus musculus</name>
    <name type="common">Mouse</name>
    <dbReference type="NCBI Taxonomy" id="10090"/>
    <lineage>
        <taxon>Eukaryota</taxon>
        <taxon>Metazoa</taxon>
        <taxon>Chordata</taxon>
        <taxon>Craniata</taxon>
        <taxon>Vertebrata</taxon>
        <taxon>Euteleostomi</taxon>
        <taxon>Mammalia</taxon>
        <taxon>Eutheria</taxon>
        <taxon>Euarchontoglires</taxon>
        <taxon>Glires</taxon>
        <taxon>Rodentia</taxon>
        <taxon>Myomorpha</taxon>
        <taxon>Muroidea</taxon>
        <taxon>Muridae</taxon>
        <taxon>Murinae</taxon>
        <taxon>Mus</taxon>
        <taxon>Mus</taxon>
    </lineage>
</organism>
<dbReference type="EMBL" id="AB055005">
    <property type="protein sequence ID" value="BAB83620.1"/>
    <property type="molecule type" value="mRNA"/>
</dbReference>
<dbReference type="EMBL" id="AJ417663">
    <property type="protein sequence ID" value="CAD10395.1"/>
    <property type="molecule type" value="mRNA"/>
</dbReference>
<dbReference type="CCDS" id="CCDS17246.1"/>
<dbReference type="RefSeq" id="NP_543128.1">
    <property type="nucleotide sequence ID" value="NM_080852.3"/>
</dbReference>
<dbReference type="SMR" id="Q8VIE6"/>
<dbReference type="FunCoup" id="Q8VIE6">
    <property type="interactions" value="1"/>
</dbReference>
<dbReference type="STRING" id="10090.ENSMUSP00000038574"/>
<dbReference type="TCDB" id="2.A.3.8.14">
    <property type="family name" value="the amino acid-polyamine-organocation (apc) family"/>
</dbReference>
<dbReference type="PaxDb" id="10090-ENSMUSP00000038574"/>
<dbReference type="DNASU" id="140918"/>
<dbReference type="Ensembl" id="ENSMUST00000037321.8">
    <property type="protein sequence ID" value="ENSMUSP00000038574.8"/>
    <property type="gene ID" value="ENSMUSG00000039710.15"/>
</dbReference>
<dbReference type="GeneID" id="140918"/>
<dbReference type="KEGG" id="mmu:140918"/>
<dbReference type="UCSC" id="uc008oqg.1">
    <property type="organism name" value="mouse"/>
</dbReference>
<dbReference type="AGR" id="MGI:2156159"/>
<dbReference type="CTD" id="140918"/>
<dbReference type="MGI" id="MGI:2156159">
    <property type="gene designation" value="Slc7a12"/>
</dbReference>
<dbReference type="VEuPathDB" id="HostDB:ENSMUSG00000039710"/>
<dbReference type="eggNOG" id="KOG1287">
    <property type="taxonomic scope" value="Eukaryota"/>
</dbReference>
<dbReference type="GeneTree" id="ENSGT00940000163578"/>
<dbReference type="HOGENOM" id="CLU_007946_3_0_1"/>
<dbReference type="OMA" id="QPFYTRC"/>
<dbReference type="OrthoDB" id="5982228at2759"/>
<dbReference type="TreeFam" id="TF313355"/>
<dbReference type="BioGRID-ORCS" id="140918">
    <property type="hits" value="1 hit in 59 CRISPR screens"/>
</dbReference>
<dbReference type="ChiTaRS" id="Slc7a12">
    <property type="organism name" value="mouse"/>
</dbReference>
<dbReference type="PRO" id="PR:Q8VIE6"/>
<dbReference type="Proteomes" id="UP000000589">
    <property type="component" value="Chromosome 3"/>
</dbReference>
<dbReference type="RNAct" id="Q8VIE6">
    <property type="molecule type" value="protein"/>
</dbReference>
<dbReference type="Bgee" id="ENSMUSG00000039710">
    <property type="expression patterns" value="Expressed in proximal tubule and 28 other cell types or tissues"/>
</dbReference>
<dbReference type="ExpressionAtlas" id="Q8VIE6">
    <property type="expression patterns" value="baseline and differential"/>
</dbReference>
<dbReference type="GO" id="GO:0016324">
    <property type="term" value="C:apical plasma membrane"/>
    <property type="evidence" value="ECO:0007669"/>
    <property type="project" value="UniProtKB-SubCell"/>
</dbReference>
<dbReference type="GO" id="GO:0009925">
    <property type="term" value="C:basal plasma membrane"/>
    <property type="evidence" value="ECO:0007669"/>
    <property type="project" value="UniProtKB-SubCell"/>
</dbReference>
<dbReference type="GO" id="GO:0005737">
    <property type="term" value="C:cytoplasm"/>
    <property type="evidence" value="ECO:0000314"/>
    <property type="project" value="MGI"/>
</dbReference>
<dbReference type="GO" id="GO:0005886">
    <property type="term" value="C:plasma membrane"/>
    <property type="evidence" value="ECO:0000314"/>
    <property type="project" value="MGI"/>
</dbReference>
<dbReference type="GO" id="GO:0015171">
    <property type="term" value="F:amino acid transmembrane transporter activity"/>
    <property type="evidence" value="ECO:0000314"/>
    <property type="project" value="MGI"/>
</dbReference>
<dbReference type="GO" id="GO:0006865">
    <property type="term" value="P:amino acid transport"/>
    <property type="evidence" value="ECO:0000314"/>
    <property type="project" value="MGI"/>
</dbReference>
<dbReference type="FunFam" id="1.20.1740.10:FF:000036">
    <property type="entry name" value="Solute carrier family 7 member 13"/>
    <property type="match status" value="1"/>
</dbReference>
<dbReference type="Gene3D" id="1.20.1740.10">
    <property type="entry name" value="Amino acid/polyamine transporter I"/>
    <property type="match status" value="1"/>
</dbReference>
<dbReference type="InterPro" id="IPR002293">
    <property type="entry name" value="AA/rel_permease1"/>
</dbReference>
<dbReference type="InterPro" id="IPR050598">
    <property type="entry name" value="AminoAcid_Transporter"/>
</dbReference>
<dbReference type="PANTHER" id="PTHR11785">
    <property type="entry name" value="AMINO ACID TRANSPORTER"/>
    <property type="match status" value="1"/>
</dbReference>
<dbReference type="PANTHER" id="PTHR11785:SF348">
    <property type="entry name" value="ASC-TYPE AMINO ACID TRANSPORTER 2"/>
    <property type="match status" value="1"/>
</dbReference>
<dbReference type="Pfam" id="PF13520">
    <property type="entry name" value="AA_permease_2"/>
    <property type="match status" value="1"/>
</dbReference>
<dbReference type="PIRSF" id="PIRSF006060">
    <property type="entry name" value="AA_transporter"/>
    <property type="match status" value="1"/>
</dbReference>
<comment type="function">
    <text evidence="3">Probably mediates sodium- and chloride-independent uptake of neutral amino acids.</text>
</comment>
<comment type="subunit">
    <text evidence="3">Probably forms multimers, perhaps with an unknown protein(s).</text>
</comment>
<comment type="subcellular location">
    <subcellularLocation>
        <location evidence="3">Apical cell membrane</location>
        <topology evidence="2">Multi-pass membrane protein</topology>
    </subcellularLocation>
    <subcellularLocation>
        <location evidence="3">Basal cell membrane</location>
        <topology evidence="2">Multi-pass membrane protein</topology>
    </subcellularLocation>
    <subcellularLocation>
        <location evidence="3">Cytoplasm</location>
    </subcellularLocation>
</comment>
<comment type="tissue specificity">
    <text evidence="3 4">Expressed in kidney and red blood cells (at protein level) (PubMed:11591708). Expressed in kidney along the collecting ducts in the cortex, outer and inner medulla (PubMed:11591708, PubMed:11943479). May be expressed in placenta, lungs, spleen and skeletal muscles (PubMed:11591708).</text>
</comment>
<comment type="induction">
    <text evidence="3">Expression in spleen is up-regulated in response to anemia.</text>
</comment>
<comment type="miscellaneous">
    <text evidence="3 4">Inactive as a transporter when expressed alone or co-expressed with SLC3A1 or SLC3A2 (PubMed:11591708, PubMed:11943479). Functional as a transporter when fused (via the C-terminus) with SLC3A1 or SLC3A2 (PubMed:11591708).</text>
</comment>
<comment type="similarity">
    <text evidence="7">Belongs to the amino acid-polyamine-organocation (APC) superfamily.</text>
</comment>
<proteinExistence type="evidence at protein level"/>
<feature type="chain" id="PRO_0000458860" description="Solute carrier family 7 member 12">
    <location>
        <begin position="1"/>
        <end position="465"/>
    </location>
</feature>
<feature type="topological domain" description="Cytoplasmic" evidence="7">
    <location>
        <begin position="1"/>
        <end position="6"/>
    </location>
</feature>
<feature type="transmembrane region" description="Helical" evidence="2">
    <location>
        <begin position="7"/>
        <end position="27"/>
    </location>
</feature>
<feature type="topological domain" description="Extracellular" evidence="7">
    <location>
        <begin position="28"/>
        <end position="39"/>
    </location>
</feature>
<feature type="transmembrane region" description="Helical" evidence="2">
    <location>
        <begin position="40"/>
        <end position="60"/>
    </location>
</feature>
<feature type="topological domain" description="Cytoplasmic" evidence="7">
    <location>
        <begin position="61"/>
        <end position="81"/>
    </location>
</feature>
<feature type="transmembrane region" description="Helical" evidence="2">
    <location>
        <begin position="82"/>
        <end position="102"/>
    </location>
</feature>
<feature type="topological domain" description="Extracellular" evidence="7">
    <location>
        <begin position="103"/>
        <end position="132"/>
    </location>
</feature>
<feature type="transmembrane region" description="Helical" evidence="2">
    <location>
        <begin position="133"/>
        <end position="153"/>
    </location>
</feature>
<feature type="topological domain" description="Cytoplasmic" evidence="7">
    <location>
        <position position="154"/>
    </location>
</feature>
<feature type="transmembrane region" description="Helical" evidence="2">
    <location>
        <begin position="155"/>
        <end position="175"/>
    </location>
</feature>
<feature type="topological domain" description="Extracellular" evidence="7">
    <location>
        <begin position="176"/>
        <end position="202"/>
    </location>
</feature>
<feature type="transmembrane region" description="Helical" evidence="2">
    <location>
        <begin position="203"/>
        <end position="223"/>
    </location>
</feature>
<feature type="topological domain" description="Cytoplasmic" evidence="7">
    <location>
        <begin position="224"/>
        <end position="234"/>
    </location>
</feature>
<feature type="transmembrane region" description="Helical" evidence="2">
    <location>
        <begin position="235"/>
        <end position="255"/>
    </location>
</feature>
<feature type="topological domain" description="Extracellular" evidence="7">
    <location>
        <begin position="256"/>
        <end position="280"/>
    </location>
</feature>
<feature type="transmembrane region" description="Helical" evidence="2">
    <location>
        <begin position="281"/>
        <end position="301"/>
    </location>
</feature>
<feature type="topological domain" description="Cytoplasmic" evidence="7">
    <location>
        <begin position="302"/>
        <end position="327"/>
    </location>
</feature>
<feature type="transmembrane region" description="Helical" evidence="2">
    <location>
        <begin position="328"/>
        <end position="351"/>
    </location>
</feature>
<feature type="topological domain" description="Extracellular" evidence="7">
    <location>
        <begin position="352"/>
        <end position="356"/>
    </location>
</feature>
<feature type="transmembrane region" description="Helical" evidence="2">
    <location>
        <begin position="357"/>
        <end position="375"/>
    </location>
</feature>
<feature type="topological domain" description="Cytoplasmic" evidence="7">
    <location>
        <begin position="376"/>
        <end position="386"/>
    </location>
</feature>
<feature type="transmembrane region" description="Helical" evidence="2">
    <location>
        <begin position="387"/>
        <end position="407"/>
    </location>
</feature>
<feature type="topological domain" description="Extracellular" evidence="7">
    <location>
        <begin position="408"/>
        <end position="409"/>
    </location>
</feature>
<feature type="transmembrane region" description="Helical" evidence="2">
    <location>
        <begin position="410"/>
        <end position="430"/>
    </location>
</feature>
<feature type="topological domain" description="Cytoplasmic" evidence="7">
    <location>
        <begin position="431"/>
        <end position="465"/>
    </location>
</feature>
<feature type="disulfide bond" description="Interchain" evidence="1">
    <location>
        <position position="121"/>
    </location>
</feature>
<feature type="sequence conflict" description="In Ref. 2; CAD10395." evidence="7" ref="2">
    <original>S</original>
    <variation>P</variation>
    <location>
        <position position="294"/>
    </location>
</feature>
<gene>
    <name evidence="10" type="primary">Slc7a12</name>
</gene>
<protein>
    <recommendedName>
        <fullName evidence="7">Solute carrier family 7 member 12</fullName>
    </recommendedName>
    <alternativeName>
        <fullName evidence="5">Asc-type amino acid transporter 2</fullName>
        <shortName evidence="5">Asc-2</shortName>
    </alternativeName>
    <alternativeName>
        <fullName evidence="6">X-amino acid transporter 1</fullName>
        <shortName evidence="6">XAT-1</shortName>
    </alternativeName>
</protein>
<evidence type="ECO:0000250" key="1">
    <source>
        <dbReference type="UniProtKB" id="Q01650"/>
    </source>
</evidence>
<evidence type="ECO:0000255" key="2"/>
<evidence type="ECO:0000269" key="3">
    <source>
    </source>
</evidence>
<evidence type="ECO:0000269" key="4">
    <source>
    </source>
</evidence>
<evidence type="ECO:0000303" key="5">
    <source>
    </source>
</evidence>
<evidence type="ECO:0000303" key="6">
    <source>
    </source>
</evidence>
<evidence type="ECO:0000305" key="7"/>
<evidence type="ECO:0000312" key="8">
    <source>
        <dbReference type="EMBL" id="BAB83620.1"/>
    </source>
</evidence>
<evidence type="ECO:0000312" key="9">
    <source>
        <dbReference type="EMBL" id="CAD10395.1"/>
    </source>
</evidence>
<evidence type="ECO:0000312" key="10">
    <source>
        <dbReference type="MGI" id="MGI:2156159"/>
    </source>
</evidence>
<evidence type="ECO:0000312" key="11">
    <source>
        <dbReference type="Proteomes" id="UP000000589"/>
    </source>
</evidence>
<accession>Q8VIE6</accession>
<accession>Q8R2J1</accession>